<sequence length="397" mass="42197">MNKNRGFTPLAVVLMLSGSLALTGCDDKQAQQGGQQMPAVGVVTVKTEPLQITTELPGRTSAYRIAEVRPQVSGIILKRNFKEGSDIEAGVSLYQIDPATYQATYDSAKGDLAKAQAAANIAQLTVNRYQKLLGTQYISKQEYDQALADAQQANAAVTAAKAAVETARINLAYTKVTSPISGRIGKSNVTEGALVQNGQATALATVQQLDPIYVDVTQSSNDFLRLKQELANGTLKQENGKAKVSLITSDGIKFPQDGTLEFSDVTVDQTTGSITLRAIFPNPDHTLLPGMFVRARLEEGLNPNAILVPQQGVTRTPRGDATVLVVGADDKVETRPIVASQAIGDKWLVTEGLKAGDRVVISGLQKVRPGVQVKAQEVTADNNQQAASGAQPEQSKS</sequence>
<protein>
    <recommendedName>
        <fullName>Multidrug efflux pump subunit AcrA</fullName>
    </recommendedName>
    <alternativeName>
        <fullName>AcrAB-TolC multidrug efflux pump subunit AcrA</fullName>
    </alternativeName>
    <alternativeName>
        <fullName>Acriflavine resistance protein A</fullName>
    </alternativeName>
</protein>
<reference key="1">
    <citation type="journal article" date="2001" name="Nature">
        <title>Genome sequence of enterohaemorrhagic Escherichia coli O157:H7.</title>
        <authorList>
            <person name="Perna N.T."/>
            <person name="Plunkett G. III"/>
            <person name="Burland V."/>
            <person name="Mau B."/>
            <person name="Glasner J.D."/>
            <person name="Rose D.J."/>
            <person name="Mayhew G.F."/>
            <person name="Evans P.S."/>
            <person name="Gregor J."/>
            <person name="Kirkpatrick H.A."/>
            <person name="Posfai G."/>
            <person name="Hackett J."/>
            <person name="Klink S."/>
            <person name="Boutin A."/>
            <person name="Shao Y."/>
            <person name="Miller L."/>
            <person name="Grotbeck E.J."/>
            <person name="Davis N.W."/>
            <person name="Lim A."/>
            <person name="Dimalanta E.T."/>
            <person name="Potamousis K."/>
            <person name="Apodaca J."/>
            <person name="Anantharaman T.S."/>
            <person name="Lin J."/>
            <person name="Yen G."/>
            <person name="Schwartz D.C."/>
            <person name="Welch R.A."/>
            <person name="Blattner F.R."/>
        </authorList>
    </citation>
    <scope>NUCLEOTIDE SEQUENCE [LARGE SCALE GENOMIC DNA]</scope>
    <source>
        <strain>O157:H7 / EDL933 / ATCC 700927 / EHEC</strain>
    </source>
</reference>
<reference key="2">
    <citation type="journal article" date="2001" name="DNA Res.">
        <title>Complete genome sequence of enterohemorrhagic Escherichia coli O157:H7 and genomic comparison with a laboratory strain K-12.</title>
        <authorList>
            <person name="Hayashi T."/>
            <person name="Makino K."/>
            <person name="Ohnishi M."/>
            <person name="Kurokawa K."/>
            <person name="Ishii K."/>
            <person name="Yokoyama K."/>
            <person name="Han C.-G."/>
            <person name="Ohtsubo E."/>
            <person name="Nakayama K."/>
            <person name="Murata T."/>
            <person name="Tanaka M."/>
            <person name="Tobe T."/>
            <person name="Iida T."/>
            <person name="Takami H."/>
            <person name="Honda T."/>
            <person name="Sasakawa C."/>
            <person name="Ogasawara N."/>
            <person name="Yasunaga T."/>
            <person name="Kuhara S."/>
            <person name="Shiba T."/>
            <person name="Hattori M."/>
            <person name="Shinagawa H."/>
        </authorList>
    </citation>
    <scope>NUCLEOTIDE SEQUENCE [LARGE SCALE GENOMIC DNA]</scope>
    <source>
        <strain>O157:H7 / Sakai / RIMD 0509952 / EHEC</strain>
    </source>
</reference>
<evidence type="ECO:0000250" key="1"/>
<evidence type="ECO:0000255" key="2">
    <source>
        <dbReference type="PROSITE-ProRule" id="PRU00303"/>
    </source>
</evidence>
<evidence type="ECO:0000256" key="3">
    <source>
        <dbReference type="SAM" id="MobiDB-lite"/>
    </source>
</evidence>
<evidence type="ECO:0000305" key="4"/>
<accession>P0AE07</accession>
<accession>P31223</accession>
<dbReference type="EMBL" id="AE005174">
    <property type="protein sequence ID" value="AAG54812.1"/>
    <property type="molecule type" value="Genomic_DNA"/>
</dbReference>
<dbReference type="EMBL" id="BA000007">
    <property type="protein sequence ID" value="BAB33939.1"/>
    <property type="molecule type" value="Genomic_DNA"/>
</dbReference>
<dbReference type="PIR" id="D90693">
    <property type="entry name" value="D90693"/>
</dbReference>
<dbReference type="PIR" id="H85543">
    <property type="entry name" value="H85543"/>
</dbReference>
<dbReference type="RefSeq" id="NP_308543.1">
    <property type="nucleotide sequence ID" value="NC_002695.1"/>
</dbReference>
<dbReference type="RefSeq" id="WP_001295324.1">
    <property type="nucleotide sequence ID" value="NZ_VOAI01000005.1"/>
</dbReference>
<dbReference type="EMDB" id="EMD-8636"/>
<dbReference type="SMR" id="P0AE07"/>
<dbReference type="STRING" id="155864.Z0578"/>
<dbReference type="GeneID" id="75202888"/>
<dbReference type="GeneID" id="914620"/>
<dbReference type="KEGG" id="ece:Z0578"/>
<dbReference type="KEGG" id="ecs:ECs_0516"/>
<dbReference type="PATRIC" id="fig|386585.9.peg.621"/>
<dbReference type="eggNOG" id="COG0845">
    <property type="taxonomic scope" value="Bacteria"/>
</dbReference>
<dbReference type="HOGENOM" id="CLU_018816_2_1_6"/>
<dbReference type="Proteomes" id="UP000000558">
    <property type="component" value="Chromosome"/>
</dbReference>
<dbReference type="Proteomes" id="UP000002519">
    <property type="component" value="Chromosome"/>
</dbReference>
<dbReference type="GO" id="GO:0005886">
    <property type="term" value="C:plasma membrane"/>
    <property type="evidence" value="ECO:0007669"/>
    <property type="project" value="UniProtKB-SubCell"/>
</dbReference>
<dbReference type="GO" id="GO:0022857">
    <property type="term" value="F:transmembrane transporter activity"/>
    <property type="evidence" value="ECO:0007669"/>
    <property type="project" value="InterPro"/>
</dbReference>
<dbReference type="GO" id="GO:0015721">
    <property type="term" value="P:bile acid and bile salt transport"/>
    <property type="evidence" value="ECO:0007669"/>
    <property type="project" value="TreeGrafter"/>
</dbReference>
<dbReference type="GO" id="GO:0046677">
    <property type="term" value="P:response to antibiotic"/>
    <property type="evidence" value="ECO:0007669"/>
    <property type="project" value="UniProtKB-KW"/>
</dbReference>
<dbReference type="GO" id="GO:0009636">
    <property type="term" value="P:response to toxic substance"/>
    <property type="evidence" value="ECO:0007669"/>
    <property type="project" value="UniProtKB-ARBA"/>
</dbReference>
<dbReference type="FunFam" id="1.10.287.470:FF:000002">
    <property type="entry name" value="Efflux RND transporter periplasmic adaptor subunit"/>
    <property type="match status" value="1"/>
</dbReference>
<dbReference type="FunFam" id="2.40.420.20:FF:000001">
    <property type="entry name" value="Efflux RND transporter periplasmic adaptor subunit"/>
    <property type="match status" value="1"/>
</dbReference>
<dbReference type="FunFam" id="2.40.30.170:FF:000001">
    <property type="entry name" value="Multidrug resistance efflux transporter MdtE"/>
    <property type="match status" value="1"/>
</dbReference>
<dbReference type="Gene3D" id="2.40.30.170">
    <property type="match status" value="1"/>
</dbReference>
<dbReference type="Gene3D" id="2.40.420.20">
    <property type="match status" value="1"/>
</dbReference>
<dbReference type="Gene3D" id="2.40.50.100">
    <property type="match status" value="1"/>
</dbReference>
<dbReference type="Gene3D" id="1.10.287.470">
    <property type="entry name" value="Helix hairpin bin"/>
    <property type="match status" value="1"/>
</dbReference>
<dbReference type="InterPro" id="IPR043602">
    <property type="entry name" value="CusB-like_dom_1"/>
</dbReference>
<dbReference type="InterPro" id="IPR032317">
    <property type="entry name" value="CusB_D23"/>
</dbReference>
<dbReference type="InterPro" id="IPR051160">
    <property type="entry name" value="MFP_Efflux"/>
</dbReference>
<dbReference type="InterPro" id="IPR006143">
    <property type="entry name" value="RND_pump_MFP"/>
</dbReference>
<dbReference type="NCBIfam" id="NF011604">
    <property type="entry name" value="PRK15030.1"/>
    <property type="match status" value="1"/>
</dbReference>
<dbReference type="NCBIfam" id="TIGR01730">
    <property type="entry name" value="RND_mfp"/>
    <property type="match status" value="1"/>
</dbReference>
<dbReference type="PANTHER" id="PTHR30158">
    <property type="entry name" value="ACRA/E-RELATED COMPONENT OF DRUG EFFLUX TRANSPORTER"/>
    <property type="match status" value="1"/>
</dbReference>
<dbReference type="PANTHER" id="PTHR30158:SF3">
    <property type="entry name" value="MULTIDRUG EFFLUX PUMP SUBUNIT ACRA-RELATED"/>
    <property type="match status" value="1"/>
</dbReference>
<dbReference type="Pfam" id="PF00529">
    <property type="entry name" value="CusB_dom_1"/>
    <property type="match status" value="1"/>
</dbReference>
<dbReference type="Pfam" id="PF16576">
    <property type="entry name" value="HlyD_D23"/>
    <property type="match status" value="1"/>
</dbReference>
<dbReference type="SUPFAM" id="SSF111369">
    <property type="entry name" value="HlyD-like secretion proteins"/>
    <property type="match status" value="1"/>
</dbReference>
<dbReference type="PROSITE" id="PS51257">
    <property type="entry name" value="PROKAR_LIPOPROTEIN"/>
    <property type="match status" value="1"/>
</dbReference>
<name>ACRA_ECO57</name>
<keyword id="KW-0046">Antibiotic resistance</keyword>
<keyword id="KW-0997">Cell inner membrane</keyword>
<keyword id="KW-1003">Cell membrane</keyword>
<keyword id="KW-0175">Coiled coil</keyword>
<keyword id="KW-0449">Lipoprotein</keyword>
<keyword id="KW-0472">Membrane</keyword>
<keyword id="KW-0564">Palmitate</keyword>
<keyword id="KW-1185">Reference proteome</keyword>
<keyword id="KW-0732">Signal</keyword>
<keyword id="KW-0813">Transport</keyword>
<feature type="signal peptide" evidence="2">
    <location>
        <begin position="1"/>
        <end position="24"/>
    </location>
</feature>
<feature type="chain" id="PRO_0000043378" description="Multidrug efflux pump subunit AcrA">
    <location>
        <begin position="25"/>
        <end position="397"/>
    </location>
</feature>
<feature type="region of interest" description="Disordered" evidence="3">
    <location>
        <begin position="377"/>
        <end position="397"/>
    </location>
</feature>
<feature type="coiled-coil region" evidence="1">
    <location>
        <begin position="98"/>
        <end position="172"/>
    </location>
</feature>
<feature type="compositionally biased region" description="Polar residues" evidence="3">
    <location>
        <begin position="379"/>
        <end position="397"/>
    </location>
</feature>
<feature type="lipid moiety-binding region" description="N-palmitoyl cysteine" evidence="2">
    <location>
        <position position="25"/>
    </location>
</feature>
<feature type="lipid moiety-binding region" description="S-diacylglycerol cysteine" evidence="2">
    <location>
        <position position="25"/>
    </location>
</feature>
<gene>
    <name type="primary">acrA</name>
    <name type="ordered locus">Z0578</name>
    <name type="ordered locus">ECs0516</name>
</gene>
<comment type="function">
    <text evidence="1">AcrA-AcrB-AcrZ-TolC is a drug efflux protein complex with broad substrate specificity that uses the proton motive force to export substrates. This subunit may act as an adapter protein that links AcrB and TolC stably together (By similarity).</text>
</comment>
<comment type="subunit">
    <text evidence="1">Monomeric in solution. Homotrimeric; interacts independently with AcrB and TolC as well as AcrZ. Part of the AcrA-AcrB-TolC efflux pump (By similarity).</text>
</comment>
<comment type="subcellular location">
    <subcellularLocation>
        <location evidence="1">Cell inner membrane</location>
        <topology evidence="2">Lipid-anchor</topology>
    </subcellularLocation>
</comment>
<comment type="similarity">
    <text evidence="4">Belongs to the membrane fusion protein (MFP) (TC 8.A.1) family.</text>
</comment>
<organism>
    <name type="scientific">Escherichia coli O157:H7</name>
    <dbReference type="NCBI Taxonomy" id="83334"/>
    <lineage>
        <taxon>Bacteria</taxon>
        <taxon>Pseudomonadati</taxon>
        <taxon>Pseudomonadota</taxon>
        <taxon>Gammaproteobacteria</taxon>
        <taxon>Enterobacterales</taxon>
        <taxon>Enterobacteriaceae</taxon>
        <taxon>Escherichia</taxon>
    </lineage>
</organism>
<proteinExistence type="inferred from homology"/>